<dbReference type="EC" id="3.6.5.-" evidence="1"/>
<dbReference type="EMBL" id="AE016826">
    <property type="protein sequence ID" value="AAO27071.1"/>
    <property type="molecule type" value="Genomic_DNA"/>
</dbReference>
<dbReference type="RefSeq" id="WP_011091472.1">
    <property type="nucleotide sequence ID" value="NC_004545.1"/>
</dbReference>
<dbReference type="SMR" id="Q89AE7"/>
<dbReference type="STRING" id="224915.bbp_352"/>
<dbReference type="KEGG" id="bab:bbp_352"/>
<dbReference type="eggNOG" id="COG0536">
    <property type="taxonomic scope" value="Bacteria"/>
</dbReference>
<dbReference type="HOGENOM" id="CLU_011747_2_0_6"/>
<dbReference type="OrthoDB" id="9807318at2"/>
<dbReference type="Proteomes" id="UP000000601">
    <property type="component" value="Chromosome"/>
</dbReference>
<dbReference type="GO" id="GO:0005737">
    <property type="term" value="C:cytoplasm"/>
    <property type="evidence" value="ECO:0007669"/>
    <property type="project" value="UniProtKB-SubCell"/>
</dbReference>
<dbReference type="GO" id="GO:0005525">
    <property type="term" value="F:GTP binding"/>
    <property type="evidence" value="ECO:0007669"/>
    <property type="project" value="UniProtKB-UniRule"/>
</dbReference>
<dbReference type="GO" id="GO:0003924">
    <property type="term" value="F:GTPase activity"/>
    <property type="evidence" value="ECO:0007669"/>
    <property type="project" value="UniProtKB-UniRule"/>
</dbReference>
<dbReference type="GO" id="GO:0000287">
    <property type="term" value="F:magnesium ion binding"/>
    <property type="evidence" value="ECO:0007669"/>
    <property type="project" value="InterPro"/>
</dbReference>
<dbReference type="GO" id="GO:0042254">
    <property type="term" value="P:ribosome biogenesis"/>
    <property type="evidence" value="ECO:0007669"/>
    <property type="project" value="UniProtKB-UniRule"/>
</dbReference>
<dbReference type="CDD" id="cd01898">
    <property type="entry name" value="Obg"/>
    <property type="match status" value="1"/>
</dbReference>
<dbReference type="FunFam" id="2.70.210.12:FF:000001">
    <property type="entry name" value="GTPase Obg"/>
    <property type="match status" value="1"/>
</dbReference>
<dbReference type="Gene3D" id="2.70.210.12">
    <property type="entry name" value="GTP1/OBG domain"/>
    <property type="match status" value="1"/>
</dbReference>
<dbReference type="Gene3D" id="3.40.50.300">
    <property type="entry name" value="P-loop containing nucleotide triphosphate hydrolases"/>
    <property type="match status" value="1"/>
</dbReference>
<dbReference type="HAMAP" id="MF_01454">
    <property type="entry name" value="GTPase_Obg"/>
    <property type="match status" value="1"/>
</dbReference>
<dbReference type="InterPro" id="IPR031167">
    <property type="entry name" value="G_OBG"/>
</dbReference>
<dbReference type="InterPro" id="IPR006073">
    <property type="entry name" value="GTP-bd"/>
</dbReference>
<dbReference type="InterPro" id="IPR014100">
    <property type="entry name" value="GTP-bd_Obg/CgtA"/>
</dbReference>
<dbReference type="InterPro" id="IPR006074">
    <property type="entry name" value="GTP1-OBG_CS"/>
</dbReference>
<dbReference type="InterPro" id="IPR006169">
    <property type="entry name" value="GTP1_OBG_dom"/>
</dbReference>
<dbReference type="InterPro" id="IPR036726">
    <property type="entry name" value="GTP1_OBG_dom_sf"/>
</dbReference>
<dbReference type="InterPro" id="IPR045086">
    <property type="entry name" value="OBG_GTPase"/>
</dbReference>
<dbReference type="InterPro" id="IPR027417">
    <property type="entry name" value="P-loop_NTPase"/>
</dbReference>
<dbReference type="InterPro" id="IPR005225">
    <property type="entry name" value="Small_GTP-bd"/>
</dbReference>
<dbReference type="NCBIfam" id="TIGR02729">
    <property type="entry name" value="Obg_CgtA"/>
    <property type="match status" value="1"/>
</dbReference>
<dbReference type="NCBIfam" id="NF008955">
    <property type="entry name" value="PRK12297.1"/>
    <property type="match status" value="1"/>
</dbReference>
<dbReference type="NCBIfam" id="NF008956">
    <property type="entry name" value="PRK12299.1"/>
    <property type="match status" value="1"/>
</dbReference>
<dbReference type="NCBIfam" id="TIGR00231">
    <property type="entry name" value="small_GTP"/>
    <property type="match status" value="1"/>
</dbReference>
<dbReference type="PANTHER" id="PTHR11702">
    <property type="entry name" value="DEVELOPMENTALLY REGULATED GTP-BINDING PROTEIN-RELATED"/>
    <property type="match status" value="1"/>
</dbReference>
<dbReference type="PANTHER" id="PTHR11702:SF31">
    <property type="entry name" value="MITOCHONDRIAL RIBOSOME-ASSOCIATED GTPASE 2"/>
    <property type="match status" value="1"/>
</dbReference>
<dbReference type="Pfam" id="PF01018">
    <property type="entry name" value="GTP1_OBG"/>
    <property type="match status" value="1"/>
</dbReference>
<dbReference type="Pfam" id="PF01926">
    <property type="entry name" value="MMR_HSR1"/>
    <property type="match status" value="1"/>
</dbReference>
<dbReference type="PIRSF" id="PIRSF002401">
    <property type="entry name" value="GTP_bd_Obg/CgtA"/>
    <property type="match status" value="1"/>
</dbReference>
<dbReference type="PRINTS" id="PR00326">
    <property type="entry name" value="GTP1OBG"/>
</dbReference>
<dbReference type="SUPFAM" id="SSF82051">
    <property type="entry name" value="Obg GTP-binding protein N-terminal domain"/>
    <property type="match status" value="1"/>
</dbReference>
<dbReference type="SUPFAM" id="SSF52540">
    <property type="entry name" value="P-loop containing nucleoside triphosphate hydrolases"/>
    <property type="match status" value="1"/>
</dbReference>
<dbReference type="PROSITE" id="PS51710">
    <property type="entry name" value="G_OBG"/>
    <property type="match status" value="1"/>
</dbReference>
<dbReference type="PROSITE" id="PS00905">
    <property type="entry name" value="GTP1_OBG"/>
    <property type="match status" value="1"/>
</dbReference>
<dbReference type="PROSITE" id="PS51883">
    <property type="entry name" value="OBG"/>
    <property type="match status" value="1"/>
</dbReference>
<evidence type="ECO:0000255" key="1">
    <source>
        <dbReference type="HAMAP-Rule" id="MF_01454"/>
    </source>
</evidence>
<evidence type="ECO:0000255" key="2">
    <source>
        <dbReference type="PROSITE-ProRule" id="PRU01231"/>
    </source>
</evidence>
<keyword id="KW-0963">Cytoplasm</keyword>
<keyword id="KW-0342">GTP-binding</keyword>
<keyword id="KW-0378">Hydrolase</keyword>
<keyword id="KW-0460">Magnesium</keyword>
<keyword id="KW-0479">Metal-binding</keyword>
<keyword id="KW-0547">Nucleotide-binding</keyword>
<keyword id="KW-1185">Reference proteome</keyword>
<name>OBG_BUCBP</name>
<gene>
    <name evidence="1" type="primary">obg</name>
    <name type="ordered locus">bbp_352</name>
</gene>
<sequence length="338" mass="37838">MKFLDKAIIHVIAGNGGHGRTSFRREKYIPKGGPDGGDGGNGGNVWLQTVTNLNTLIDFKFTKIFKAQDGQQGFNKKKTGKKGSDIVIQIPIGTKIIDHNTNEIIEDMIQDKQLVLVAKGGWHGLGNTRFKSSTNRIPIKHTKGTQGEFRILRLELILIAHVGTLGLPNSGKSTLVRNISNAKTKIANYPFTTLKPVLGTVKINHKEFFVIADIPGLIQGASHGIGLGYQFLKHLERCHLLLHIIDISQINFKNTITNIHVILDELKTYNKILHNKPIWFVFNKIDLIDDIDINTKLKSILEKLGSIQQYFLISAIKKTGLKKIVKKIYDFLKNKNLL</sequence>
<protein>
    <recommendedName>
        <fullName evidence="1">GTPase Obg</fullName>
        <ecNumber evidence="1">3.6.5.-</ecNumber>
    </recommendedName>
    <alternativeName>
        <fullName evidence="1">GTP-binding protein Obg</fullName>
    </alternativeName>
</protein>
<reference key="1">
    <citation type="journal article" date="2003" name="Proc. Natl. Acad. Sci. U.S.A.">
        <title>Reductive genome evolution in Buchnera aphidicola.</title>
        <authorList>
            <person name="van Ham R.C.H.J."/>
            <person name="Kamerbeek J."/>
            <person name="Palacios C."/>
            <person name="Rausell C."/>
            <person name="Abascal F."/>
            <person name="Bastolla U."/>
            <person name="Fernandez J.M."/>
            <person name="Jimenez L."/>
            <person name="Postigo M."/>
            <person name="Silva F.J."/>
            <person name="Tamames J."/>
            <person name="Viguera E."/>
            <person name="Latorre A."/>
            <person name="Valencia A."/>
            <person name="Moran F."/>
            <person name="Moya A."/>
        </authorList>
    </citation>
    <scope>NUCLEOTIDE SEQUENCE [LARGE SCALE GENOMIC DNA]</scope>
    <source>
        <strain>Bp</strain>
    </source>
</reference>
<comment type="function">
    <text evidence="1">An essential GTPase which binds GTP, GDP and possibly (p)ppGpp with moderate affinity, with high nucleotide exchange rates and a fairly low GTP hydrolysis rate. Plays a role in control of the cell cycle, stress response, ribosome biogenesis and in those bacteria that undergo differentiation, in morphogenesis control.</text>
</comment>
<comment type="cofactor">
    <cofactor evidence="1">
        <name>Mg(2+)</name>
        <dbReference type="ChEBI" id="CHEBI:18420"/>
    </cofactor>
</comment>
<comment type="subunit">
    <text evidence="1">Monomer.</text>
</comment>
<comment type="subcellular location">
    <subcellularLocation>
        <location evidence="1">Cytoplasm</location>
    </subcellularLocation>
</comment>
<comment type="similarity">
    <text evidence="1">Belongs to the TRAFAC class OBG-HflX-like GTPase superfamily. OBG GTPase family.</text>
</comment>
<organism>
    <name type="scientific">Buchnera aphidicola subsp. Baizongia pistaciae (strain Bp)</name>
    <dbReference type="NCBI Taxonomy" id="224915"/>
    <lineage>
        <taxon>Bacteria</taxon>
        <taxon>Pseudomonadati</taxon>
        <taxon>Pseudomonadota</taxon>
        <taxon>Gammaproteobacteria</taxon>
        <taxon>Enterobacterales</taxon>
        <taxon>Erwiniaceae</taxon>
        <taxon>Buchnera</taxon>
    </lineage>
</organism>
<accession>Q89AE7</accession>
<feature type="chain" id="PRO_0000205437" description="GTPase Obg">
    <location>
        <begin position="1"/>
        <end position="338"/>
    </location>
</feature>
<feature type="domain" description="Obg" evidence="2">
    <location>
        <begin position="1"/>
        <end position="159"/>
    </location>
</feature>
<feature type="domain" description="OBG-type G" evidence="1">
    <location>
        <begin position="160"/>
        <end position="333"/>
    </location>
</feature>
<feature type="binding site" evidence="1">
    <location>
        <begin position="166"/>
        <end position="173"/>
    </location>
    <ligand>
        <name>GTP</name>
        <dbReference type="ChEBI" id="CHEBI:37565"/>
    </ligand>
</feature>
<feature type="binding site" evidence="1">
    <location>
        <position position="173"/>
    </location>
    <ligand>
        <name>Mg(2+)</name>
        <dbReference type="ChEBI" id="CHEBI:18420"/>
    </ligand>
</feature>
<feature type="binding site" evidence="1">
    <location>
        <begin position="191"/>
        <end position="195"/>
    </location>
    <ligand>
        <name>GTP</name>
        <dbReference type="ChEBI" id="CHEBI:37565"/>
    </ligand>
</feature>
<feature type="binding site" evidence="1">
    <location>
        <position position="193"/>
    </location>
    <ligand>
        <name>Mg(2+)</name>
        <dbReference type="ChEBI" id="CHEBI:18420"/>
    </ligand>
</feature>
<feature type="binding site" evidence="1">
    <location>
        <begin position="213"/>
        <end position="216"/>
    </location>
    <ligand>
        <name>GTP</name>
        <dbReference type="ChEBI" id="CHEBI:37565"/>
    </ligand>
</feature>
<feature type="binding site" evidence="1">
    <location>
        <begin position="283"/>
        <end position="286"/>
    </location>
    <ligand>
        <name>GTP</name>
        <dbReference type="ChEBI" id="CHEBI:37565"/>
    </ligand>
</feature>
<feature type="binding site" evidence="1">
    <location>
        <begin position="314"/>
        <end position="316"/>
    </location>
    <ligand>
        <name>GTP</name>
        <dbReference type="ChEBI" id="CHEBI:37565"/>
    </ligand>
</feature>
<proteinExistence type="inferred from homology"/>